<protein>
    <recommendedName>
        <fullName>Phospholemman-like protein</fullName>
    </recommendedName>
    <alternativeName>
        <fullName>PLMS</fullName>
    </alternativeName>
</protein>
<sequence>VSDVPNNDDRFTY</sequence>
<dbReference type="GO" id="GO:0034707">
    <property type="term" value="C:chloride channel complex"/>
    <property type="evidence" value="ECO:0007669"/>
    <property type="project" value="UniProtKB-KW"/>
</dbReference>
<dbReference type="GO" id="GO:0005789">
    <property type="term" value="C:endoplasmic reticulum membrane"/>
    <property type="evidence" value="ECO:0007669"/>
    <property type="project" value="UniProtKB-SubCell"/>
</dbReference>
<dbReference type="GO" id="GO:0043231">
    <property type="term" value="C:intracellular membrane-bounded organelle"/>
    <property type="evidence" value="ECO:0000314"/>
    <property type="project" value="UniProtKB"/>
</dbReference>
<dbReference type="GO" id="GO:0005254">
    <property type="term" value="F:chloride channel activity"/>
    <property type="evidence" value="ECO:0007669"/>
    <property type="project" value="UniProtKB-KW"/>
</dbReference>
<name>PLMS_LAMNA</name>
<keyword id="KW-0868">Chloride</keyword>
<keyword id="KW-0869">Chloride channel</keyword>
<keyword id="KW-0903">Direct protein sequencing</keyword>
<keyword id="KW-0256">Endoplasmic reticulum</keyword>
<keyword id="KW-0407">Ion channel</keyword>
<keyword id="KW-0406">Ion transport</keyword>
<keyword id="KW-0472">Membrane</keyword>
<keyword id="KW-0492">Microsome</keyword>
<keyword id="KW-0597">Phosphoprotein</keyword>
<keyword id="KW-0812">Transmembrane</keyword>
<keyword id="KW-0813">Transport</keyword>
<organism>
    <name type="scientific">Lamna nasus</name>
    <name type="common">Porbeagle shark</name>
    <name type="synonym">Squalus nasus</name>
    <dbReference type="NCBI Taxonomy" id="7849"/>
    <lineage>
        <taxon>Eukaryota</taxon>
        <taxon>Metazoa</taxon>
        <taxon>Chordata</taxon>
        <taxon>Craniata</taxon>
        <taxon>Vertebrata</taxon>
        <taxon>Chondrichthyes</taxon>
        <taxon>Elasmobranchii</taxon>
        <taxon>Galeomorphii</taxon>
        <taxon>Galeoidea</taxon>
        <taxon>Lamniformes</taxon>
        <taxon>Alopiidae</taxon>
        <taxon>Lamna</taxon>
    </lineage>
</organism>
<comment type="function">
    <text evidence="4">Induces a hyperpolarization-activated chloride current when expressed in Xenopus oocytes. May have a functional role in muscle contraction.</text>
</comment>
<comment type="subcellular location">
    <subcellularLocation>
        <location>Microsome membrane</location>
        <topology>Single-pass type I membrane protein</topology>
    </subcellularLocation>
    <subcellularLocation>
        <location evidence="4">Endoplasmic reticulum membrane</location>
        <topology evidence="4">Single-pass type I membrane protein</topology>
    </subcellularLocation>
</comment>
<comment type="PTM">
    <text evidence="1">Major plasma membrane substrate for camp-dependent protein kinase (PK-A) and protein kinase C (PK-C) in several different tissues. Phosphorylated in response to insulin and adrenergic stimulation (By similarity).</text>
</comment>
<comment type="similarity">
    <text evidence="1">Belongs to the FXYD family.</text>
</comment>
<feature type="chain" id="PRO_0000148181" description="Phospholemman-like protein">
    <location>
        <begin position="1"/>
        <end position="13" status="greater than"/>
    </location>
</feature>
<feature type="non-terminal residue" evidence="3">
    <location>
        <position position="13"/>
    </location>
</feature>
<accession>P83009</accession>
<evidence type="ECO:0000250" key="1">
    <source>
        <dbReference type="UniProtKB" id="P56513"/>
    </source>
</evidence>
<evidence type="ECO:0000269" key="2">
    <source>
    </source>
</evidence>
<evidence type="ECO:0000303" key="3">
    <source>
    </source>
</evidence>
<evidence type="ECO:0000305" key="4"/>
<reference evidence="4" key="1">
    <citation type="journal article" date="2001" name="Biochem. Biophys. Res. Commun.">
        <title>N-terminal sequences of small ion channels in rectal glands of sharks: a biochemical hallmark for classification and phylogeny?</title>
        <authorList>
            <person name="Schuurmans Stekhoven F.M.A.H."/>
            <person name="Flik G."/>
            <person name="Wendelaar Bonga S.E."/>
        </authorList>
    </citation>
    <scope>PROTEIN SEQUENCE</scope>
    <source>
        <tissue evidence="2">Rectal gland</tissue>
    </source>
</reference>
<proteinExistence type="evidence at protein level"/>